<organism>
    <name type="scientific">Strongylocentrotus purpuratus</name>
    <name type="common">Purple sea urchin</name>
    <dbReference type="NCBI Taxonomy" id="7668"/>
    <lineage>
        <taxon>Eukaryota</taxon>
        <taxon>Metazoa</taxon>
        <taxon>Echinodermata</taxon>
        <taxon>Eleutherozoa</taxon>
        <taxon>Echinozoa</taxon>
        <taxon>Echinoidea</taxon>
        <taxon>Euechinoidea</taxon>
        <taxon>Echinacea</taxon>
        <taxon>Camarodonta</taxon>
        <taxon>Echinidea</taxon>
        <taxon>Strongylocentrotidae</taxon>
        <taxon>Strongylocentrotus</taxon>
    </lineage>
</organism>
<feature type="chain" id="PRO_0000197347" description="Metallothionein-A">
    <location>
        <begin position="1"/>
        <end position="64"/>
    </location>
</feature>
<feature type="sequence conflict" description="In Ref. 2; AAA30061." evidence="1" ref="2">
    <original>K</original>
    <variation>T</variation>
    <location>
        <position position="10"/>
    </location>
</feature>
<feature type="sequence conflict" description="In Ref. 2; AAA30061." evidence="1" ref="2">
    <original>K</original>
    <variation>V</variation>
    <location>
        <position position="24"/>
    </location>
</feature>
<feature type="helix" evidence="2">
    <location>
        <begin position="7"/>
        <end position="11"/>
    </location>
</feature>
<feature type="strand" evidence="2">
    <location>
        <begin position="19"/>
        <end position="21"/>
    </location>
</feature>
<feature type="helix" evidence="2">
    <location>
        <begin position="22"/>
        <end position="25"/>
    </location>
</feature>
<feature type="strand" evidence="2">
    <location>
        <begin position="29"/>
        <end position="32"/>
    </location>
</feature>
<protein>
    <recommendedName>
        <fullName>Metallothionein-A</fullName>
        <shortName>MTA</shortName>
    </recommendedName>
</protein>
<comment type="function">
    <text>Metallothioneins have a high content of cysteine residues that bind various heavy metals.</text>
</comment>
<comment type="induction">
    <text>By heavy metals.</text>
</comment>
<comment type="similarity">
    <text evidence="1">Belongs to the metallothionein superfamily. Type 4 family.</text>
</comment>
<proteinExistence type="evidence at protein level"/>
<evidence type="ECO:0000305" key="1"/>
<evidence type="ECO:0007829" key="2">
    <source>
        <dbReference type="PDB" id="1QJK"/>
    </source>
</evidence>
<accession>P04734</accession>
<keyword id="KW-0002">3D-structure</keyword>
<keyword id="KW-0479">Metal-binding</keyword>
<keyword id="KW-0480">Metal-thiolate cluster</keyword>
<keyword id="KW-1185">Reference proteome</keyword>
<gene>
    <name type="primary">MTA</name>
</gene>
<sequence>MPDVKCVCCKEGKECACFGQDCCKTGECCKDGTCCGICTNAACKCANGCKCGSGCSCTEGNCAC</sequence>
<dbReference type="EMBL" id="M30606">
    <property type="protein sequence ID" value="AAA30067.1"/>
    <property type="molecule type" value="Genomic_DNA"/>
</dbReference>
<dbReference type="EMBL" id="K02464">
    <property type="protein sequence ID" value="AAA30061.1"/>
    <property type="molecule type" value="mRNA"/>
</dbReference>
<dbReference type="PIR" id="A25775">
    <property type="entry name" value="A25775"/>
</dbReference>
<dbReference type="PIR" id="A33825">
    <property type="entry name" value="A33825"/>
</dbReference>
<dbReference type="RefSeq" id="NP_999742.1">
    <property type="nucleotide sequence ID" value="NM_214577.1"/>
</dbReference>
<dbReference type="PDB" id="1QJK">
    <property type="method" value="NMR"/>
    <property type="chains" value="A=2-37"/>
</dbReference>
<dbReference type="PDB" id="1QJL">
    <property type="method" value="NMR"/>
    <property type="chains" value="A=37-64"/>
</dbReference>
<dbReference type="PDBsum" id="1QJK"/>
<dbReference type="PDBsum" id="1QJL"/>
<dbReference type="SMR" id="P04734"/>
<dbReference type="EnsemblMetazoa" id="XM_030990197">
    <property type="protein sequence ID" value="XP_030846057"/>
    <property type="gene ID" value="LOC115926005"/>
</dbReference>
<dbReference type="EnsemblMetazoa" id="XM_030990198">
    <property type="protein sequence ID" value="XP_030846058"/>
    <property type="gene ID" value="LOC115926005"/>
</dbReference>
<dbReference type="GeneID" id="373380"/>
<dbReference type="KEGG" id="spu:373380"/>
<dbReference type="CTD" id="373380"/>
<dbReference type="HOGENOM" id="CLU_2834403_0_0_1"/>
<dbReference type="InParanoid" id="P04734"/>
<dbReference type="EvolutionaryTrace" id="P04734"/>
<dbReference type="Proteomes" id="UP000007110">
    <property type="component" value="Unassembled WGS sequence"/>
</dbReference>
<dbReference type="GO" id="GO:0046872">
    <property type="term" value="F:metal ion binding"/>
    <property type="evidence" value="ECO:0007669"/>
    <property type="project" value="UniProtKB-KW"/>
</dbReference>
<dbReference type="InterPro" id="IPR017980">
    <property type="entry name" value="Metalthion_4_echinoid/annelid"/>
</dbReference>
<dbReference type="InterPro" id="IPR001396">
    <property type="entry name" value="Metalthion_4_echinoidea"/>
</dbReference>
<dbReference type="InterPro" id="IPR017854">
    <property type="entry name" value="Metalthion_dom_sf"/>
</dbReference>
<dbReference type="Pfam" id="PF05522">
    <property type="entry name" value="Metallothio_6"/>
    <property type="match status" value="1"/>
</dbReference>
<dbReference type="PRINTS" id="PR00873">
    <property type="entry name" value="MTECHINOIDEA"/>
</dbReference>
<dbReference type="SUPFAM" id="SSF57868">
    <property type="entry name" value="Metallothionein"/>
    <property type="match status" value="2"/>
</dbReference>
<name>MTA_STRPU</name>
<reference key="1">
    <citation type="journal article" date="1989" name="Mol. Cell. Biol.">
        <title>Structure of an ectodermally expressed sea urchin metallothionein gene and characterization of its metal-responsive region.</title>
        <authorList>
            <person name="Harlow P."/>
            <person name="Watkins E."/>
            <person name="Thornton R.D."/>
            <person name="Nemer M."/>
        </authorList>
    </citation>
    <scope>NUCLEOTIDE SEQUENCE [GENOMIC DNA]</scope>
</reference>
<reference key="2">
    <citation type="journal article" date="1985" name="Proc. Natl. Acad. Sci. U.S.A.">
        <title>Sea urchin metallothionein sequence: key to an evolutionary diversity.</title>
        <authorList>
            <person name="Nemer M."/>
            <person name="Wilkinson D.G."/>
            <person name="Travaglini E.C."/>
            <person name="Sternberg E.J."/>
            <person name="Butt T.R."/>
        </authorList>
    </citation>
    <scope>NUCLEOTIDE SEQUENCE [MRNA]</scope>
</reference>
<reference key="3">
    <citation type="journal article" date="1999" name="J. Mol. Biol.">
        <title>NMR structure of the sea urchin (Strongylocentrotus purpuratus) metallothionein MTA.</title>
        <authorList>
            <person name="Riek R."/>
            <person name="Precheur B."/>
            <person name="Wang Y."/>
            <person name="Mackay E.A."/>
            <person name="Wider G."/>
            <person name="Guntert P."/>
            <person name="Liu A."/>
            <person name="Kaegi J.H.R."/>
            <person name="Wuethrich K."/>
        </authorList>
    </citation>
    <scope>STRUCTURE BY NMR</scope>
</reference>